<feature type="chain" id="PRO_0000070357" description="Macrodomain Ter protein">
    <location>
        <begin position="1"/>
        <end position="150"/>
    </location>
</feature>
<name>MATP_SHIFL</name>
<dbReference type="EMBL" id="AE005674">
    <property type="protein sequence ID" value="AAN42585.1"/>
    <property type="status" value="ALT_FRAME"/>
    <property type="molecule type" value="Genomic_DNA"/>
</dbReference>
<dbReference type="EMBL" id="AE014073">
    <property type="protein sequence ID" value="AAP16470.1"/>
    <property type="molecule type" value="Genomic_DNA"/>
</dbReference>
<dbReference type="RefSeq" id="WP_000877161.1">
    <property type="nucleotide sequence ID" value="NZ_WPGW01000054.1"/>
</dbReference>
<dbReference type="SMR" id="P0A8N2"/>
<dbReference type="STRING" id="198214.SF0956"/>
<dbReference type="PaxDb" id="198214-SF0956"/>
<dbReference type="GeneID" id="93776458"/>
<dbReference type="KEGG" id="sfl:SF0956"/>
<dbReference type="KEGG" id="sfx:S1022"/>
<dbReference type="PATRIC" id="fig|198214.7.peg.1114"/>
<dbReference type="HOGENOM" id="CLU_142157_0_0_6"/>
<dbReference type="Proteomes" id="UP000001006">
    <property type="component" value="Chromosome"/>
</dbReference>
<dbReference type="Proteomes" id="UP000002673">
    <property type="component" value="Chromosome"/>
</dbReference>
<dbReference type="GO" id="GO:0005737">
    <property type="term" value="C:cytoplasm"/>
    <property type="evidence" value="ECO:0007669"/>
    <property type="project" value="UniProtKB-SubCell"/>
</dbReference>
<dbReference type="GO" id="GO:0043565">
    <property type="term" value="F:sequence-specific DNA binding"/>
    <property type="evidence" value="ECO:0007669"/>
    <property type="project" value="UniProtKB-UniRule"/>
</dbReference>
<dbReference type="GO" id="GO:0051301">
    <property type="term" value="P:cell division"/>
    <property type="evidence" value="ECO:0007669"/>
    <property type="project" value="UniProtKB-UniRule"/>
</dbReference>
<dbReference type="GO" id="GO:0006355">
    <property type="term" value="P:regulation of DNA-templated transcription"/>
    <property type="evidence" value="ECO:0007669"/>
    <property type="project" value="InterPro"/>
</dbReference>
<dbReference type="FunFam" id="1.10.1220.10:FF:000004">
    <property type="entry name" value="Macrodomain Ter protein"/>
    <property type="match status" value="1"/>
</dbReference>
<dbReference type="FunFam" id="1.20.1270.380:FF:000001">
    <property type="entry name" value="Macrodomain Ter protein"/>
    <property type="match status" value="1"/>
</dbReference>
<dbReference type="Gene3D" id="1.20.1270.380">
    <property type="entry name" value="MatP, N-terminal domain"/>
    <property type="match status" value="1"/>
</dbReference>
<dbReference type="Gene3D" id="1.10.1220.10">
    <property type="entry name" value="Met repressor-like"/>
    <property type="match status" value="1"/>
</dbReference>
<dbReference type="HAMAP" id="MF_01073">
    <property type="entry name" value="MatP"/>
    <property type="match status" value="1"/>
</dbReference>
<dbReference type="InterPro" id="IPR013321">
    <property type="entry name" value="Arc_rbn_hlx_hlx"/>
</dbReference>
<dbReference type="InterPro" id="IPR009390">
    <property type="entry name" value="MatP"/>
</dbReference>
<dbReference type="InterPro" id="IPR035375">
    <property type="entry name" value="MatP_C"/>
</dbReference>
<dbReference type="InterPro" id="IPR035087">
    <property type="entry name" value="MatP_N"/>
</dbReference>
<dbReference type="InterPro" id="IPR038339">
    <property type="entry name" value="MatP_N_sf"/>
</dbReference>
<dbReference type="NCBIfam" id="NF003471">
    <property type="entry name" value="PRK05097.1"/>
    <property type="match status" value="1"/>
</dbReference>
<dbReference type="Pfam" id="PF06303">
    <property type="entry name" value="MatP"/>
    <property type="match status" value="1"/>
</dbReference>
<dbReference type="Pfam" id="PF17414">
    <property type="entry name" value="MatP_C"/>
    <property type="match status" value="1"/>
</dbReference>
<evidence type="ECO:0000255" key="1">
    <source>
        <dbReference type="HAMAP-Rule" id="MF_01073"/>
    </source>
</evidence>
<evidence type="ECO:0000305" key="2"/>
<reference key="1">
    <citation type="journal article" date="2002" name="Nucleic Acids Res.">
        <title>Genome sequence of Shigella flexneri 2a: insights into pathogenicity through comparison with genomes of Escherichia coli K12 and O157.</title>
        <authorList>
            <person name="Jin Q."/>
            <person name="Yuan Z."/>
            <person name="Xu J."/>
            <person name="Wang Y."/>
            <person name="Shen Y."/>
            <person name="Lu W."/>
            <person name="Wang J."/>
            <person name="Liu H."/>
            <person name="Yang J."/>
            <person name="Yang F."/>
            <person name="Zhang X."/>
            <person name="Zhang J."/>
            <person name="Yang G."/>
            <person name="Wu H."/>
            <person name="Qu D."/>
            <person name="Dong J."/>
            <person name="Sun L."/>
            <person name="Xue Y."/>
            <person name="Zhao A."/>
            <person name="Gao Y."/>
            <person name="Zhu J."/>
            <person name="Kan B."/>
            <person name="Ding K."/>
            <person name="Chen S."/>
            <person name="Cheng H."/>
            <person name="Yao Z."/>
            <person name="He B."/>
            <person name="Chen R."/>
            <person name="Ma D."/>
            <person name="Qiang B."/>
            <person name="Wen Y."/>
            <person name="Hou Y."/>
            <person name="Yu J."/>
        </authorList>
    </citation>
    <scope>NUCLEOTIDE SEQUENCE [LARGE SCALE GENOMIC DNA]</scope>
    <source>
        <strain>301 / Serotype 2a</strain>
    </source>
</reference>
<reference key="2">
    <citation type="journal article" date="2003" name="Infect. Immun.">
        <title>Complete genome sequence and comparative genomics of Shigella flexneri serotype 2a strain 2457T.</title>
        <authorList>
            <person name="Wei J."/>
            <person name="Goldberg M.B."/>
            <person name="Burland V."/>
            <person name="Venkatesan M.M."/>
            <person name="Deng W."/>
            <person name="Fournier G."/>
            <person name="Mayhew G.F."/>
            <person name="Plunkett G. III"/>
            <person name="Rose D.J."/>
            <person name="Darling A."/>
            <person name="Mau B."/>
            <person name="Perna N.T."/>
            <person name="Payne S.M."/>
            <person name="Runyen-Janecky L.J."/>
            <person name="Zhou S."/>
            <person name="Schwartz D.C."/>
            <person name="Blattner F.R."/>
        </authorList>
    </citation>
    <scope>NUCLEOTIDE SEQUENCE [LARGE SCALE GENOMIC DNA]</scope>
    <source>
        <strain>ATCC 700930 / 2457T / Serotype 2a</strain>
    </source>
</reference>
<gene>
    <name evidence="1" type="primary">matP</name>
    <name type="ordered locus">SF0956</name>
    <name type="ordered locus">S1022</name>
</gene>
<sequence>MKYQQLENLESGWKWKYLVKKHREGELITRYIEASAAQEAVDVLLSLENEPVLVNGWIDKHMNPELVNRMKQTIRARRKRHFNAEHQHTRKKSIDLEFIVWQRLAGLAQRRGKTLSETIVQLIEDAENKEKYANKMSSLKQDLQALLGKE</sequence>
<proteinExistence type="inferred from homology"/>
<keyword id="KW-0131">Cell cycle</keyword>
<keyword id="KW-0132">Cell division</keyword>
<keyword id="KW-0963">Cytoplasm</keyword>
<keyword id="KW-0238">DNA-binding</keyword>
<keyword id="KW-1185">Reference proteome</keyword>
<comment type="function">
    <text evidence="1">Required for spatial organization of the terminus region of the chromosome (Ter macrodomain) during the cell cycle. Prevents early segregation of duplicated Ter macrodomains during cell division. Binds specifically to matS, which is a 13 bp signature motif repeated within the Ter macrodomain.</text>
</comment>
<comment type="subunit">
    <text evidence="1">Homodimer.</text>
</comment>
<comment type="subcellular location">
    <subcellularLocation>
        <location evidence="1">Cytoplasm</location>
    </subcellularLocation>
</comment>
<comment type="similarity">
    <text evidence="1">Belongs to the MatP family.</text>
</comment>
<comment type="sequence caution" evidence="2">
    <conflict type="frameshift">
        <sequence resource="EMBL-CDS" id="AAN42585"/>
    </conflict>
</comment>
<accession>P0A8N2</accession>
<accession>P45569</accession>
<accession>P75868</accession>
<accession>Q83RX3</accession>
<protein>
    <recommendedName>
        <fullName evidence="1">Macrodomain Ter protein</fullName>
    </recommendedName>
</protein>
<organism>
    <name type="scientific">Shigella flexneri</name>
    <dbReference type="NCBI Taxonomy" id="623"/>
    <lineage>
        <taxon>Bacteria</taxon>
        <taxon>Pseudomonadati</taxon>
        <taxon>Pseudomonadota</taxon>
        <taxon>Gammaproteobacteria</taxon>
        <taxon>Enterobacterales</taxon>
        <taxon>Enterobacteriaceae</taxon>
        <taxon>Shigella</taxon>
    </lineage>
</organism>